<keyword id="KW-1185">Reference proteome</keyword>
<keyword id="KW-0687">Ribonucleoprotein</keyword>
<keyword id="KW-0689">Ribosomal protein</keyword>
<evidence type="ECO:0000255" key="1">
    <source>
        <dbReference type="HAMAP-Rule" id="MF_00391"/>
    </source>
</evidence>
<evidence type="ECO:0000256" key="2">
    <source>
        <dbReference type="SAM" id="MobiDB-lite"/>
    </source>
</evidence>
<evidence type="ECO:0000305" key="3"/>
<sequence>MKRTYQPSVTKRKRTHGFLVRSKTRGGRAVLAARRAKGRKRLAV</sequence>
<comment type="similarity">
    <text evidence="1">Belongs to the bacterial ribosomal protein bL34 family.</text>
</comment>
<organism>
    <name type="scientific">Neisseria gonorrhoeae (strain ATCC 700825 / FA 1090)</name>
    <dbReference type="NCBI Taxonomy" id="242231"/>
    <lineage>
        <taxon>Bacteria</taxon>
        <taxon>Pseudomonadati</taxon>
        <taxon>Pseudomonadota</taxon>
        <taxon>Betaproteobacteria</taxon>
        <taxon>Neisseriales</taxon>
        <taxon>Neisseriaceae</taxon>
        <taxon>Neisseria</taxon>
    </lineage>
</organism>
<dbReference type="EMBL" id="AE004969">
    <property type="protein sequence ID" value="AAW90775.1"/>
    <property type="molecule type" value="Genomic_DNA"/>
</dbReference>
<dbReference type="RefSeq" id="WP_002214728.1">
    <property type="nucleotide sequence ID" value="NC_002946.2"/>
</dbReference>
<dbReference type="RefSeq" id="YP_209187.1">
    <property type="nucleotide sequence ID" value="NC_002946.2"/>
</dbReference>
<dbReference type="SMR" id="Q5F4W2"/>
<dbReference type="STRING" id="242231.NGO_2182"/>
<dbReference type="GeneID" id="94582113"/>
<dbReference type="KEGG" id="ngo:NGO_2182"/>
<dbReference type="PATRIC" id="fig|242231.10.peg.2635"/>
<dbReference type="HOGENOM" id="CLU_129938_2_0_4"/>
<dbReference type="PRO" id="PR:Q5F4W2"/>
<dbReference type="Proteomes" id="UP000000535">
    <property type="component" value="Chromosome"/>
</dbReference>
<dbReference type="GO" id="GO:1990904">
    <property type="term" value="C:ribonucleoprotein complex"/>
    <property type="evidence" value="ECO:0007669"/>
    <property type="project" value="UniProtKB-KW"/>
</dbReference>
<dbReference type="GO" id="GO:0005840">
    <property type="term" value="C:ribosome"/>
    <property type="evidence" value="ECO:0007669"/>
    <property type="project" value="UniProtKB-KW"/>
</dbReference>
<dbReference type="GO" id="GO:0003735">
    <property type="term" value="F:structural constituent of ribosome"/>
    <property type="evidence" value="ECO:0007669"/>
    <property type="project" value="InterPro"/>
</dbReference>
<dbReference type="GO" id="GO:0006412">
    <property type="term" value="P:translation"/>
    <property type="evidence" value="ECO:0007669"/>
    <property type="project" value="UniProtKB-UniRule"/>
</dbReference>
<dbReference type="FunFam" id="1.10.287.3980:FF:000001">
    <property type="entry name" value="Mitochondrial ribosomal protein L34"/>
    <property type="match status" value="1"/>
</dbReference>
<dbReference type="Gene3D" id="1.10.287.3980">
    <property type="match status" value="1"/>
</dbReference>
<dbReference type="HAMAP" id="MF_00391">
    <property type="entry name" value="Ribosomal_bL34"/>
    <property type="match status" value="1"/>
</dbReference>
<dbReference type="InterPro" id="IPR000271">
    <property type="entry name" value="Ribosomal_bL34"/>
</dbReference>
<dbReference type="InterPro" id="IPR020939">
    <property type="entry name" value="Ribosomal_bL34_CS"/>
</dbReference>
<dbReference type="NCBIfam" id="TIGR01030">
    <property type="entry name" value="rpmH_bact"/>
    <property type="match status" value="1"/>
</dbReference>
<dbReference type="PANTHER" id="PTHR14503:SF4">
    <property type="entry name" value="LARGE RIBOSOMAL SUBUNIT PROTEIN BL34M"/>
    <property type="match status" value="1"/>
</dbReference>
<dbReference type="PANTHER" id="PTHR14503">
    <property type="entry name" value="MITOCHONDRIAL RIBOSOMAL PROTEIN 34 FAMILY MEMBER"/>
    <property type="match status" value="1"/>
</dbReference>
<dbReference type="Pfam" id="PF00468">
    <property type="entry name" value="Ribosomal_L34"/>
    <property type="match status" value="1"/>
</dbReference>
<dbReference type="PROSITE" id="PS00784">
    <property type="entry name" value="RIBOSOMAL_L34"/>
    <property type="match status" value="1"/>
</dbReference>
<accession>Q5F4W2</accession>
<gene>
    <name evidence="1" type="primary">rpmH</name>
    <name type="ordered locus">NGO_2182</name>
</gene>
<reference key="1">
    <citation type="submission" date="2003-03" db="EMBL/GenBank/DDBJ databases">
        <title>The complete genome sequence of Neisseria gonorrhoeae.</title>
        <authorList>
            <person name="Lewis L.A."/>
            <person name="Gillaspy A.F."/>
            <person name="McLaughlin R.E."/>
            <person name="Gipson M."/>
            <person name="Ducey T.F."/>
            <person name="Ownbey T."/>
            <person name="Hartman K."/>
            <person name="Nydick C."/>
            <person name="Carson M.B."/>
            <person name="Vaughn J."/>
            <person name="Thomson C."/>
            <person name="Song L."/>
            <person name="Lin S."/>
            <person name="Yuan X."/>
            <person name="Najar F."/>
            <person name="Zhan M."/>
            <person name="Ren Q."/>
            <person name="Zhu H."/>
            <person name="Qi S."/>
            <person name="Kenton S.M."/>
            <person name="Lai H."/>
            <person name="White J.D."/>
            <person name="Clifton S."/>
            <person name="Roe B.A."/>
            <person name="Dyer D.W."/>
        </authorList>
    </citation>
    <scope>NUCLEOTIDE SEQUENCE [LARGE SCALE GENOMIC DNA]</scope>
    <source>
        <strain>ATCC 700825 / FA 1090</strain>
    </source>
</reference>
<name>RL34_NEIG1</name>
<feature type="chain" id="PRO_0000187425" description="Large ribosomal subunit protein bL34">
    <location>
        <begin position="1"/>
        <end position="44"/>
    </location>
</feature>
<feature type="region of interest" description="Disordered" evidence="2">
    <location>
        <begin position="24"/>
        <end position="44"/>
    </location>
</feature>
<feature type="compositionally biased region" description="Basic residues" evidence="2">
    <location>
        <begin position="34"/>
        <end position="44"/>
    </location>
</feature>
<protein>
    <recommendedName>
        <fullName evidence="1">Large ribosomal subunit protein bL34</fullName>
    </recommendedName>
    <alternativeName>
        <fullName evidence="3">50S ribosomal protein L34</fullName>
    </alternativeName>
</protein>
<proteinExistence type="inferred from homology"/>